<evidence type="ECO:0000250" key="1"/>
<evidence type="ECO:0000255" key="2">
    <source>
        <dbReference type="PROSITE-ProRule" id="PRU00159"/>
    </source>
</evidence>
<evidence type="ECO:0000255" key="3">
    <source>
        <dbReference type="PROSITE-ProRule" id="PRU10027"/>
    </source>
</evidence>
<evidence type="ECO:0000256" key="4">
    <source>
        <dbReference type="SAM" id="MobiDB-lite"/>
    </source>
</evidence>
<feature type="chain" id="PRO_0000238452" description="Serine/threonine-protein kinase SBK1">
    <location>
        <begin position="1"/>
        <end position="417"/>
    </location>
</feature>
<feature type="domain" description="Protein kinase" evidence="2">
    <location>
        <begin position="53"/>
        <end position="318"/>
    </location>
</feature>
<feature type="region of interest" description="Disordered" evidence="4">
    <location>
        <begin position="321"/>
        <end position="405"/>
    </location>
</feature>
<feature type="compositionally biased region" description="Pro residues" evidence="4">
    <location>
        <begin position="363"/>
        <end position="382"/>
    </location>
</feature>
<feature type="active site" description="Proton acceptor" evidence="2 3">
    <location>
        <position position="174"/>
    </location>
</feature>
<feature type="binding site" evidence="2">
    <location>
        <begin position="59"/>
        <end position="67"/>
    </location>
    <ligand>
        <name>ATP</name>
        <dbReference type="ChEBI" id="CHEBI:30616"/>
    </ligand>
</feature>
<feature type="binding site" evidence="2">
    <location>
        <position position="82"/>
    </location>
    <ligand>
        <name>ATP</name>
        <dbReference type="ChEBI" id="CHEBI:30616"/>
    </ligand>
</feature>
<keyword id="KW-0067">ATP-binding</keyword>
<keyword id="KW-0963">Cytoplasm</keyword>
<keyword id="KW-0418">Kinase</keyword>
<keyword id="KW-0547">Nucleotide-binding</keyword>
<keyword id="KW-1185">Reference proteome</keyword>
<keyword id="KW-0723">Serine/threonine-protein kinase</keyword>
<keyword id="KW-0808">Transferase</keyword>
<sequence length="417" mass="45696">MSVGCPEPEPLHSLPCCGPGAAPVPGAGVPLLTEDMQALTLRTLAASDVTKHYELVRELGKGTYGKVDLVAYKGTGTKMALKFVNKSKTKLKNFLREVSITNSLSSSPFIIKVFDVVFETEECYVFAQEYAPAGDLFDIIPPQVGLPEDTVKRCVQQLGLALDFMHSRQLVHRDIKPENVLLFDRECRRVKLADFGMTRRVGCRVKRVSGTIPYTAPEVCQAGRADGFAVDTGVDVWAFGVLIFCVLTGNFPWEAASGADAFFEEFVRWQRGRLPGLPSQWRRFTEPALRMFQRLLALEPERRGPAKEVFRFLKHELTSELRRRPSHRARKPPGDRLPGSLRLEAPGPLKRTVLTESGSGSRPSPPSVGPVVPVPVPVPVPVPEAGLAPPAPPGRTDGRTDKSKGQVVLATAIEICV</sequence>
<accession>Q8QZX0</accession>
<name>SBK1_MOUSE</name>
<comment type="function">
    <text evidence="1">May be involved in signal-transduction pathways related to the control of brain development.</text>
</comment>
<comment type="catalytic activity">
    <reaction>
        <text>L-seryl-[protein] + ATP = O-phospho-L-seryl-[protein] + ADP + H(+)</text>
        <dbReference type="Rhea" id="RHEA:17989"/>
        <dbReference type="Rhea" id="RHEA-COMP:9863"/>
        <dbReference type="Rhea" id="RHEA-COMP:11604"/>
        <dbReference type="ChEBI" id="CHEBI:15378"/>
        <dbReference type="ChEBI" id="CHEBI:29999"/>
        <dbReference type="ChEBI" id="CHEBI:30616"/>
        <dbReference type="ChEBI" id="CHEBI:83421"/>
        <dbReference type="ChEBI" id="CHEBI:456216"/>
        <dbReference type="EC" id="2.7.11.1"/>
    </reaction>
</comment>
<comment type="catalytic activity">
    <reaction>
        <text>L-threonyl-[protein] + ATP = O-phospho-L-threonyl-[protein] + ADP + H(+)</text>
        <dbReference type="Rhea" id="RHEA:46608"/>
        <dbReference type="Rhea" id="RHEA-COMP:11060"/>
        <dbReference type="Rhea" id="RHEA-COMP:11605"/>
        <dbReference type="ChEBI" id="CHEBI:15378"/>
        <dbReference type="ChEBI" id="CHEBI:30013"/>
        <dbReference type="ChEBI" id="CHEBI:30616"/>
        <dbReference type="ChEBI" id="CHEBI:61977"/>
        <dbReference type="ChEBI" id="CHEBI:456216"/>
        <dbReference type="EC" id="2.7.11.1"/>
    </reaction>
</comment>
<comment type="subcellular location">
    <subcellularLocation>
        <location evidence="1">Cytoplasm</location>
    </subcellularLocation>
</comment>
<comment type="similarity">
    <text evidence="2">Belongs to the protein kinase superfamily. Ser/Thr protein kinase family.</text>
</comment>
<reference key="1">
    <citation type="journal article" date="2004" name="Genome Res.">
        <title>The status, quality, and expansion of the NIH full-length cDNA project: the Mammalian Gene Collection (MGC).</title>
        <authorList>
            <consortium name="The MGC Project Team"/>
        </authorList>
    </citation>
    <scope>NUCLEOTIDE SEQUENCE [LARGE SCALE MRNA]</scope>
    <source>
        <strain>FVB/N</strain>
        <tissue>Liver</tissue>
    </source>
</reference>
<dbReference type="EC" id="2.7.11.1"/>
<dbReference type="EMBL" id="BC024114">
    <property type="protein sequence ID" value="AAH24114.1"/>
    <property type="molecule type" value="mRNA"/>
</dbReference>
<dbReference type="EMBL" id="BC025837">
    <property type="protein sequence ID" value="AAH25837.1"/>
    <property type="molecule type" value="mRNA"/>
</dbReference>
<dbReference type="EMBL" id="BC031759">
    <property type="protein sequence ID" value="AAH31759.1"/>
    <property type="molecule type" value="mRNA"/>
</dbReference>
<dbReference type="CCDS" id="CCDS21824.1"/>
<dbReference type="RefSeq" id="NP_001347740.1">
    <property type="nucleotide sequence ID" value="NM_001360811.2"/>
</dbReference>
<dbReference type="RefSeq" id="NP_001390491.1">
    <property type="nucleotide sequence ID" value="NM_001403562.1"/>
</dbReference>
<dbReference type="RefSeq" id="NP_663562.1">
    <property type="nucleotide sequence ID" value="NM_145587.4"/>
</dbReference>
<dbReference type="RefSeq" id="XP_017177409.1">
    <property type="nucleotide sequence ID" value="XM_017321920.1"/>
</dbReference>
<dbReference type="SMR" id="Q8QZX0"/>
<dbReference type="FunCoup" id="Q8QZX0">
    <property type="interactions" value="288"/>
</dbReference>
<dbReference type="STRING" id="10090.ENSMUSP00000060907"/>
<dbReference type="PhosphoSitePlus" id="Q8QZX0"/>
<dbReference type="PaxDb" id="10090-ENSMUSP00000060907"/>
<dbReference type="ProteomicsDB" id="256839"/>
<dbReference type="Antibodypedia" id="55882">
    <property type="antibodies" value="21 antibodies from 12 providers"/>
</dbReference>
<dbReference type="DNASU" id="104175"/>
<dbReference type="Ensembl" id="ENSMUST00000056028.11">
    <property type="protein sequence ID" value="ENSMUSP00000060907.10"/>
    <property type="gene ID" value="ENSMUSG00000042978.12"/>
</dbReference>
<dbReference type="GeneID" id="104175"/>
<dbReference type="KEGG" id="mmu:104175"/>
<dbReference type="UCSC" id="uc009jqw.1">
    <property type="organism name" value="mouse"/>
</dbReference>
<dbReference type="AGR" id="MGI:2135937"/>
<dbReference type="CTD" id="388228"/>
<dbReference type="MGI" id="MGI:2135937">
    <property type="gene designation" value="Sbk1"/>
</dbReference>
<dbReference type="VEuPathDB" id="HostDB:ENSMUSG00000042978"/>
<dbReference type="eggNOG" id="KOG1345">
    <property type="taxonomic scope" value="Eukaryota"/>
</dbReference>
<dbReference type="GeneTree" id="ENSGT00940000154852"/>
<dbReference type="HOGENOM" id="CLU_000288_10_1_1"/>
<dbReference type="InParanoid" id="Q8QZX0"/>
<dbReference type="OMA" id="IFCFIKY"/>
<dbReference type="PhylomeDB" id="Q8QZX0"/>
<dbReference type="TreeFam" id="TF326736"/>
<dbReference type="BioGRID-ORCS" id="104175">
    <property type="hits" value="1 hit in 81 CRISPR screens"/>
</dbReference>
<dbReference type="ChiTaRS" id="Sbk1">
    <property type="organism name" value="mouse"/>
</dbReference>
<dbReference type="PRO" id="PR:Q8QZX0"/>
<dbReference type="Proteomes" id="UP000000589">
    <property type="component" value="Chromosome 7"/>
</dbReference>
<dbReference type="RNAct" id="Q8QZX0">
    <property type="molecule type" value="protein"/>
</dbReference>
<dbReference type="Bgee" id="ENSMUSG00000042978">
    <property type="expression patterns" value="Expressed in rostral migratory stream and 252 other cell types or tissues"/>
</dbReference>
<dbReference type="ExpressionAtlas" id="Q8QZX0">
    <property type="expression patterns" value="baseline and differential"/>
</dbReference>
<dbReference type="GO" id="GO:0005737">
    <property type="term" value="C:cytoplasm"/>
    <property type="evidence" value="ECO:0007669"/>
    <property type="project" value="UniProtKB-SubCell"/>
</dbReference>
<dbReference type="GO" id="GO:0005524">
    <property type="term" value="F:ATP binding"/>
    <property type="evidence" value="ECO:0007669"/>
    <property type="project" value="UniProtKB-KW"/>
</dbReference>
<dbReference type="GO" id="GO:0106310">
    <property type="term" value="F:protein serine kinase activity"/>
    <property type="evidence" value="ECO:0007669"/>
    <property type="project" value="RHEA"/>
</dbReference>
<dbReference type="GO" id="GO:0004674">
    <property type="term" value="F:protein serine/threonine kinase activity"/>
    <property type="evidence" value="ECO:0000266"/>
    <property type="project" value="MGI"/>
</dbReference>
<dbReference type="CDD" id="cd13987">
    <property type="entry name" value="STKc_SBK1"/>
    <property type="match status" value="1"/>
</dbReference>
<dbReference type="FunFam" id="1.10.510.10:FF:000337">
    <property type="entry name" value="Serine/threonine-protein kinase SBK1"/>
    <property type="match status" value="1"/>
</dbReference>
<dbReference type="Gene3D" id="1.10.510.10">
    <property type="entry name" value="Transferase(Phosphotransferase) domain 1"/>
    <property type="match status" value="1"/>
</dbReference>
<dbReference type="InterPro" id="IPR011009">
    <property type="entry name" value="Kinase-like_dom_sf"/>
</dbReference>
<dbReference type="InterPro" id="IPR000719">
    <property type="entry name" value="Prot_kinase_dom"/>
</dbReference>
<dbReference type="InterPro" id="IPR008271">
    <property type="entry name" value="Ser/Thr_kinase_AS"/>
</dbReference>
<dbReference type="InterPro" id="IPR016234">
    <property type="entry name" value="Ser/Thr_kinase_Sbk1"/>
</dbReference>
<dbReference type="PANTHER" id="PTHR24359">
    <property type="entry name" value="SERINE/THREONINE-PROTEIN KINASE SBK1"/>
    <property type="match status" value="1"/>
</dbReference>
<dbReference type="PANTHER" id="PTHR24359:SF0">
    <property type="entry name" value="SERINE_THREONINE-PROTEIN KINASE SBK1"/>
    <property type="match status" value="1"/>
</dbReference>
<dbReference type="Pfam" id="PF00069">
    <property type="entry name" value="Pkinase"/>
    <property type="match status" value="1"/>
</dbReference>
<dbReference type="PIRSF" id="PIRSF000566">
    <property type="entry name" value="Ser/Thr_PK_Sbk1"/>
    <property type="match status" value="1"/>
</dbReference>
<dbReference type="SMART" id="SM00220">
    <property type="entry name" value="S_TKc"/>
    <property type="match status" value="1"/>
</dbReference>
<dbReference type="SUPFAM" id="SSF56112">
    <property type="entry name" value="Protein kinase-like (PK-like)"/>
    <property type="match status" value="1"/>
</dbReference>
<dbReference type="PROSITE" id="PS50011">
    <property type="entry name" value="PROTEIN_KINASE_DOM"/>
    <property type="match status" value="1"/>
</dbReference>
<dbReference type="PROSITE" id="PS00108">
    <property type="entry name" value="PROTEIN_KINASE_ST"/>
    <property type="match status" value="1"/>
</dbReference>
<organism>
    <name type="scientific">Mus musculus</name>
    <name type="common">Mouse</name>
    <dbReference type="NCBI Taxonomy" id="10090"/>
    <lineage>
        <taxon>Eukaryota</taxon>
        <taxon>Metazoa</taxon>
        <taxon>Chordata</taxon>
        <taxon>Craniata</taxon>
        <taxon>Vertebrata</taxon>
        <taxon>Euteleostomi</taxon>
        <taxon>Mammalia</taxon>
        <taxon>Eutheria</taxon>
        <taxon>Euarchontoglires</taxon>
        <taxon>Glires</taxon>
        <taxon>Rodentia</taxon>
        <taxon>Myomorpha</taxon>
        <taxon>Muroidea</taxon>
        <taxon>Muridae</taxon>
        <taxon>Murinae</taxon>
        <taxon>Mus</taxon>
        <taxon>Mus</taxon>
    </lineage>
</organism>
<gene>
    <name type="primary">Sbk1</name>
    <name type="synonym">Sbk</name>
</gene>
<proteinExistence type="evidence at transcript level"/>
<protein>
    <recommendedName>
        <fullName>Serine/threonine-protein kinase SBK1</fullName>
        <ecNumber>2.7.11.1</ecNumber>
    </recommendedName>
    <alternativeName>
        <fullName>SH3 domain-binding kinase 1</fullName>
    </alternativeName>
</protein>